<feature type="chain" id="PRO_0000415727" description="Probable acyl-activating enzyme 17, peroxisomal">
    <location>
        <begin position="1"/>
        <end position="721"/>
    </location>
</feature>
<feature type="short sequence motif" description="Microbody targeting signal" evidence="2">
    <location>
        <begin position="719"/>
        <end position="721"/>
    </location>
</feature>
<feature type="sequence conflict" description="In Ref. 4; AAP03027." evidence="5" ref="4">
    <original>L</original>
    <variation>P</variation>
    <location>
        <position position="77"/>
    </location>
</feature>
<feature type="sequence conflict" description="In Ref. 4; AAP03027." evidence="5" ref="4">
    <original>V</original>
    <variation>F</variation>
    <location>
        <position position="112"/>
    </location>
</feature>
<feature type="sequence conflict" description="In Ref. 4; AAP03027." evidence="5" ref="4">
    <original>S</original>
    <variation>F</variation>
    <location>
        <position position="154"/>
    </location>
</feature>
<feature type="sequence conflict" description="In Ref. 4; AAP03027." evidence="5" ref="4">
    <original>K</original>
    <variation>N</variation>
    <location>
        <position position="161"/>
    </location>
</feature>
<feature type="sequence conflict" description="In Ref. 4; AAP03027." evidence="5" ref="4">
    <original>T</original>
    <variation>A</variation>
    <location>
        <position position="176"/>
    </location>
</feature>
<feature type="sequence conflict" description="In Ref. 4; AAP03027." evidence="5" ref="4">
    <original>G</original>
    <variation>D</variation>
    <location>
        <position position="223"/>
    </location>
</feature>
<feature type="sequence conflict" description="In Ref. 4; AAP03027." evidence="5" ref="4">
    <original>N</original>
    <variation>K</variation>
    <location>
        <position position="328"/>
    </location>
</feature>
<feature type="sequence conflict" description="In Ref. 4; AAP03027." evidence="5" ref="4">
    <original>A</original>
    <variation>V</variation>
    <location>
        <position position="344"/>
    </location>
</feature>
<feature type="sequence conflict" description="In Ref. 4; AAP03027." evidence="5" ref="4">
    <original>R</original>
    <variation>Q</variation>
    <location>
        <position position="389"/>
    </location>
</feature>
<feature type="sequence conflict" description="In Ref. 4; AAP03027." evidence="5" ref="4">
    <original>D</original>
    <variation>G</variation>
    <location>
        <position position="533"/>
    </location>
</feature>
<feature type="sequence conflict" description="In Ref. 4; AAP03027." evidence="5" ref="4">
    <original>H</original>
    <variation>Y</variation>
    <location>
        <position position="554"/>
    </location>
</feature>
<feature type="sequence conflict" description="In Ref. 4; AAP03027." evidence="5" ref="4">
    <original>FSNP</original>
    <variation>LSNH</variation>
    <location>
        <begin position="660"/>
        <end position="663"/>
    </location>
</feature>
<feature type="sequence conflict" description="In Ref. 4; AAP03027." evidence="5" ref="4">
    <original>P</original>
    <variation>L</variation>
    <location>
        <position position="693"/>
    </location>
</feature>
<comment type="function">
    <text evidence="1">May act as an acid--thiol ligase that activates carboxylic acids by forming acyl-CoAs.</text>
</comment>
<comment type="subcellular location">
    <subcellularLocation>
        <location>Peroxisome</location>
    </subcellularLocation>
</comment>
<comment type="tissue specificity">
    <text evidence="3">Expressed in leaves, stems and developing seeds.</text>
</comment>
<comment type="disruption phenotype">
    <text evidence="4">No visible phenotype under normal growth conditions.</text>
</comment>
<comment type="similarity">
    <text evidence="5">Belongs to the ATP-dependent AMP-binding enzyme family.</text>
</comment>
<comment type="sequence caution" evidence="5">
    <conflict type="erroneous gene model prediction">
        <sequence resource="EMBL-CDS" id="BAB09822"/>
    </conflict>
</comment>
<keyword id="KW-0276">Fatty acid metabolism</keyword>
<keyword id="KW-0436">Ligase</keyword>
<keyword id="KW-0443">Lipid metabolism</keyword>
<keyword id="KW-0576">Peroxisome</keyword>
<keyword id="KW-1185">Reference proteome</keyword>
<organism>
    <name type="scientific">Arabidopsis thaliana</name>
    <name type="common">Mouse-ear cress</name>
    <dbReference type="NCBI Taxonomy" id="3702"/>
    <lineage>
        <taxon>Eukaryota</taxon>
        <taxon>Viridiplantae</taxon>
        <taxon>Streptophyta</taxon>
        <taxon>Embryophyta</taxon>
        <taxon>Tracheophyta</taxon>
        <taxon>Spermatophyta</taxon>
        <taxon>Magnoliopsida</taxon>
        <taxon>eudicotyledons</taxon>
        <taxon>Gunneridae</taxon>
        <taxon>Pentapetalae</taxon>
        <taxon>rosids</taxon>
        <taxon>malvids</taxon>
        <taxon>Brassicales</taxon>
        <taxon>Brassicaceae</taxon>
        <taxon>Camelineae</taxon>
        <taxon>Arabidopsis</taxon>
    </lineage>
</organism>
<protein>
    <recommendedName>
        <fullName>Probable acyl-activating enzyme 17, peroxisomal</fullName>
        <ecNumber>6.2.1.-</ecNumber>
    </recommendedName>
</protein>
<proteinExistence type="evidence at transcript level"/>
<dbReference type="EC" id="6.2.1.-"/>
<dbReference type="EMBL" id="AB006708">
    <property type="protein sequence ID" value="BAB09822.1"/>
    <property type="status" value="ALT_SEQ"/>
    <property type="molecule type" value="Genomic_DNA"/>
</dbReference>
<dbReference type="EMBL" id="CP002688">
    <property type="protein sequence ID" value="AED93113.1"/>
    <property type="molecule type" value="Genomic_DNA"/>
</dbReference>
<dbReference type="EMBL" id="AK228851">
    <property type="protein sequence ID" value="BAF00745.1"/>
    <property type="molecule type" value="mRNA"/>
</dbReference>
<dbReference type="EMBL" id="AY250844">
    <property type="protein sequence ID" value="AAP03027.1"/>
    <property type="molecule type" value="mRNA"/>
</dbReference>
<dbReference type="RefSeq" id="NP_197696.2">
    <property type="nucleotide sequence ID" value="NM_122211.3"/>
</dbReference>
<dbReference type="SMR" id="F4KBF3"/>
<dbReference type="FunCoup" id="F4KBF3">
    <property type="interactions" value="24"/>
</dbReference>
<dbReference type="STRING" id="3702.F4KBF3"/>
<dbReference type="PaxDb" id="3702-AT5G23050.1"/>
<dbReference type="ProteomicsDB" id="243296"/>
<dbReference type="EnsemblPlants" id="AT5G23050.1">
    <property type="protein sequence ID" value="AT5G23050.1"/>
    <property type="gene ID" value="AT5G23050"/>
</dbReference>
<dbReference type="GeneID" id="832369"/>
<dbReference type="Gramene" id="AT5G23050.1">
    <property type="protein sequence ID" value="AT5G23050.1"/>
    <property type="gene ID" value="AT5G23050"/>
</dbReference>
<dbReference type="KEGG" id="ath:AT5G23050"/>
<dbReference type="Araport" id="AT5G23050"/>
<dbReference type="TAIR" id="AT5G23050">
    <property type="gene designation" value="AAE17"/>
</dbReference>
<dbReference type="eggNOG" id="KOG1175">
    <property type="taxonomic scope" value="Eukaryota"/>
</dbReference>
<dbReference type="HOGENOM" id="CLU_000022_3_8_1"/>
<dbReference type="InParanoid" id="F4KBF3"/>
<dbReference type="OMA" id="TGWIMYM"/>
<dbReference type="PRO" id="PR:F4KBF3"/>
<dbReference type="Proteomes" id="UP000006548">
    <property type="component" value="Chromosome 5"/>
</dbReference>
<dbReference type="ExpressionAtlas" id="F4KBF3">
    <property type="expression patterns" value="baseline and differential"/>
</dbReference>
<dbReference type="GO" id="GO:0005777">
    <property type="term" value="C:peroxisome"/>
    <property type="evidence" value="ECO:0007669"/>
    <property type="project" value="UniProtKB-SubCell"/>
</dbReference>
<dbReference type="GO" id="GO:0016874">
    <property type="term" value="F:ligase activity"/>
    <property type="evidence" value="ECO:0007669"/>
    <property type="project" value="UniProtKB-KW"/>
</dbReference>
<dbReference type="GO" id="GO:0006631">
    <property type="term" value="P:fatty acid metabolic process"/>
    <property type="evidence" value="ECO:0007669"/>
    <property type="project" value="UniProtKB-KW"/>
</dbReference>
<dbReference type="Gene3D" id="3.30.300.30">
    <property type="match status" value="1"/>
</dbReference>
<dbReference type="Gene3D" id="3.40.50.12780">
    <property type="entry name" value="N-terminal domain of ligase-like"/>
    <property type="match status" value="1"/>
</dbReference>
<dbReference type="InterPro" id="IPR025110">
    <property type="entry name" value="AMP-bd_C"/>
</dbReference>
<dbReference type="InterPro" id="IPR045851">
    <property type="entry name" value="AMP-bd_C_sf"/>
</dbReference>
<dbReference type="InterPro" id="IPR020845">
    <property type="entry name" value="AMP-binding_CS"/>
</dbReference>
<dbReference type="InterPro" id="IPR000873">
    <property type="entry name" value="AMP-dep_synth/lig_dom"/>
</dbReference>
<dbReference type="InterPro" id="IPR042099">
    <property type="entry name" value="ANL_N_sf"/>
</dbReference>
<dbReference type="PANTHER" id="PTHR44378">
    <property type="entry name" value="ACYL-ACTIVATING ENZYME 17, PEROXISOMAL-RELATED"/>
    <property type="match status" value="1"/>
</dbReference>
<dbReference type="PANTHER" id="PTHR44378:SF2">
    <property type="entry name" value="ACYL-ACTIVATING ENZYME 17, PEROXISOMAL-RELATED"/>
    <property type="match status" value="1"/>
</dbReference>
<dbReference type="Pfam" id="PF00501">
    <property type="entry name" value="AMP-binding"/>
    <property type="match status" value="1"/>
</dbReference>
<dbReference type="Pfam" id="PF13193">
    <property type="entry name" value="AMP-binding_C"/>
    <property type="match status" value="1"/>
</dbReference>
<dbReference type="SUPFAM" id="SSF56801">
    <property type="entry name" value="Acetyl-CoA synthetase-like"/>
    <property type="match status" value="1"/>
</dbReference>
<dbReference type="PROSITE" id="PS00455">
    <property type="entry name" value="AMP_BINDING"/>
    <property type="match status" value="1"/>
</dbReference>
<accession>F4KBF3</accession>
<accession>Q0WQ54</accession>
<accession>Q84P18</accession>
<accession>Q9FN49</accession>
<reference key="1">
    <citation type="journal article" date="1997" name="DNA Res.">
        <title>Structural analysis of Arabidopsis thaliana chromosome 5. II. Sequence features of the regions of 1,044,062 bp covered by thirteen physically assigned P1 clones.</title>
        <authorList>
            <person name="Kotani H."/>
            <person name="Nakamura Y."/>
            <person name="Sato S."/>
            <person name="Kaneko T."/>
            <person name="Asamizu E."/>
            <person name="Miyajima N."/>
            <person name="Tabata S."/>
        </authorList>
    </citation>
    <scope>NUCLEOTIDE SEQUENCE [LARGE SCALE GENOMIC DNA]</scope>
    <source>
        <strain>cv. Columbia</strain>
    </source>
</reference>
<reference key="2">
    <citation type="journal article" date="2017" name="Plant J.">
        <title>Araport11: a complete reannotation of the Arabidopsis thaliana reference genome.</title>
        <authorList>
            <person name="Cheng C.Y."/>
            <person name="Krishnakumar V."/>
            <person name="Chan A.P."/>
            <person name="Thibaud-Nissen F."/>
            <person name="Schobel S."/>
            <person name="Town C.D."/>
        </authorList>
    </citation>
    <scope>GENOME REANNOTATION</scope>
    <source>
        <strain>cv. Columbia</strain>
    </source>
</reference>
<reference key="3">
    <citation type="submission" date="2006-07" db="EMBL/GenBank/DDBJ databases">
        <title>Large-scale analysis of RIKEN Arabidopsis full-length (RAFL) cDNAs.</title>
        <authorList>
            <person name="Totoki Y."/>
            <person name="Seki M."/>
            <person name="Ishida J."/>
            <person name="Nakajima M."/>
            <person name="Enju A."/>
            <person name="Kamiya A."/>
            <person name="Narusaka M."/>
            <person name="Shin-i T."/>
            <person name="Nakagawa M."/>
            <person name="Sakamoto N."/>
            <person name="Oishi K."/>
            <person name="Kohara Y."/>
            <person name="Kobayashi M."/>
            <person name="Toyoda A."/>
            <person name="Sakaki Y."/>
            <person name="Sakurai T."/>
            <person name="Iida K."/>
            <person name="Akiyama K."/>
            <person name="Satou M."/>
            <person name="Toyoda T."/>
            <person name="Konagaya A."/>
            <person name="Carninci P."/>
            <person name="Kawai J."/>
            <person name="Hayashizaki Y."/>
            <person name="Shinozaki K."/>
        </authorList>
    </citation>
    <scope>NUCLEOTIDE SEQUENCE [LARGE SCALE MRNA] OF 1-295</scope>
    <source>
        <strain>cv. Columbia</strain>
    </source>
</reference>
<reference key="4">
    <citation type="journal article" date="2003" name="Plant Physiol.">
        <title>Arabidopsis contains a large superfamily of acyl-activating enzymes. Phylogenetic and biochemical analysis reveals a new class of acyl-coenzyme a synthetases.</title>
        <authorList>
            <person name="Shockey J.M."/>
            <person name="Fulda M.S."/>
            <person name="Browse J."/>
        </authorList>
    </citation>
    <scope>NUCLEOTIDE SEQUENCE [MRNA] OF 64-721</scope>
    <scope>TISSUE SPECIFICITY</scope>
    <scope>GENE FAMILY</scope>
    <scope>NOMENCLATURE</scope>
</reference>
<reference key="5">
    <citation type="journal article" date="2009" name="Plant Mol. Biol.">
        <title>Identification of two Arabidopsis genes encoding a peroxisomal oxidoreductase-like protein and an acyl-CoA synthetase-like protein that are required for responses to pro-auxins.</title>
        <authorList>
            <person name="Wiszniewski A.A."/>
            <person name="Zhou W."/>
            <person name="Smith S.M."/>
            <person name="Bussell J.D."/>
        </authorList>
    </citation>
    <scope>DISRUPTION PHENOTYPE</scope>
</reference>
<evidence type="ECO:0000250" key="1"/>
<evidence type="ECO:0000255" key="2"/>
<evidence type="ECO:0000269" key="3">
    <source>
    </source>
</evidence>
<evidence type="ECO:0000269" key="4">
    <source>
    </source>
</evidence>
<evidence type="ECO:0000305" key="5"/>
<name>AAE17_ARATH</name>
<sequence>MAYKSLNSITKSDIEALGISGDVSEKLLRDLEDIIHGSSTPPETWIQISRRILHPNLPFSFHQMMYYGCYKDFGPDLPAWIPDPKVASLTNVGKLLEKRGKEFLGGNYKNPVSSFSSFQEFSVSNPEVYWKTVLDELNILFSVPPKCILEKDTSGDNPGGKWLPGAYLNPARNCLTNGFKRRLDDIVIRWRDEGSDDLPVNTMTLLELRSQVWLAAHALSALGLEEESAIAVDMPMNVESVIIYLAIVLAGHVVVSIADSFSPREISTRLKISKAKAIFTQDVIIRGDKSIPLYRRVVDAEAPLAIVVPARGSSCRMKLREKDLSWNNFLGNARNLRGVEYVAAEKPAGAYTNILFSSGTTGEPKAIPWTNISPLKSAADAWCHLDVQRGDVVAWPTNLGWMMGPWLVYASLINGACMGLYNGSPLGPTFAKFVQDAEVSVLGVIPSIVRTWQNSNSTSGYDWSRIRCFGSTGEASNIDEYLWLMGRAHYKPVIEYCGGTEIGGSFISGSLLQPQSLAAFSTAAMGCKLFILDEDSNPIPPYAAGVGELALCPHMFGASSTLLNGNHFKVYFQGMPTFQGQILRRHGDLFERTSKGYYRAHGRADDTMNLGGIKVGSIEIERVCNSVDDSVLETAAIGVPPPSGGPEQLVIAVVFKSPEFSNPDLNLLKKSFNSEIQKKLNPLFKVSSVVTLPSLPRTATNKVMRRVLRQQLTQTGLNSKL</sequence>
<gene>
    <name type="primary">AAE17</name>
    <name type="ordered locus">At5g23050</name>
    <name type="ORF">MYJ24.4</name>
</gene>